<evidence type="ECO:0000250" key="1"/>
<evidence type="ECO:0000250" key="2">
    <source>
        <dbReference type="UniProtKB" id="P00338"/>
    </source>
</evidence>
<evidence type="ECO:0000305" key="3"/>
<sequence>MASTKEKLIAHVSKEQPAGPTNKVTVVGVGMVGMAAAVSILLKDLTDELALVDVMEDKLKGEAMDLQHGSLFLKTHKIVADKDYSVTANSKVVVVTAGARQQEGESRLNLVQRNVNIFKFIIPNIIKYSPNCILLVVSNPVDILTYVAWKLSGLPRNRVIGSGTNLDSARFRYLMGEKLGIHPSSCHGWVVGEHGDSSVPVWSGVNVAGVSLQALNPDLGTDKDKEDWKSVHKMVVDSAYEVIKLKGYTSWAIGMSVADLCESILKNMHKCHPVSTLVKGMHGVNEEVFLSVPCILGNNGLTDVVHMTLKPEEEKQLVKSAETLWGVQKELTL</sequence>
<keyword id="KW-0963">Cytoplasm</keyword>
<keyword id="KW-0520">NAD</keyword>
<keyword id="KW-0560">Oxidoreductase</keyword>
<keyword id="KW-1185">Reference proteome</keyword>
<name>LDHA_DANRE</name>
<organism>
    <name type="scientific">Danio rerio</name>
    <name type="common">Zebrafish</name>
    <name type="synonym">Brachydanio rerio</name>
    <dbReference type="NCBI Taxonomy" id="7955"/>
    <lineage>
        <taxon>Eukaryota</taxon>
        <taxon>Metazoa</taxon>
        <taxon>Chordata</taxon>
        <taxon>Craniata</taxon>
        <taxon>Vertebrata</taxon>
        <taxon>Euteleostomi</taxon>
        <taxon>Actinopterygii</taxon>
        <taxon>Neopterygii</taxon>
        <taxon>Teleostei</taxon>
        <taxon>Ostariophysi</taxon>
        <taxon>Cypriniformes</taxon>
        <taxon>Danionidae</taxon>
        <taxon>Danioninae</taxon>
        <taxon>Danio</taxon>
    </lineage>
</organism>
<proteinExistence type="evidence at transcript level"/>
<protein>
    <recommendedName>
        <fullName>L-lactate dehydrogenase A chain</fullName>
        <shortName>LDH-A</shortName>
        <ecNumber evidence="2">1.1.1.27</ecNumber>
    </recommendedName>
</protein>
<accession>Q9PVK5</accession>
<comment type="function">
    <text evidence="2">Interconverts simultaneously and stereospecifically pyruvate and lactate with concomitant interconversion of NADH and NAD(+).</text>
</comment>
<comment type="catalytic activity">
    <reaction evidence="2">
        <text>(S)-lactate + NAD(+) = pyruvate + NADH + H(+)</text>
        <dbReference type="Rhea" id="RHEA:23444"/>
        <dbReference type="ChEBI" id="CHEBI:15361"/>
        <dbReference type="ChEBI" id="CHEBI:15378"/>
        <dbReference type="ChEBI" id="CHEBI:16651"/>
        <dbReference type="ChEBI" id="CHEBI:57540"/>
        <dbReference type="ChEBI" id="CHEBI:57945"/>
        <dbReference type="EC" id="1.1.1.27"/>
    </reaction>
    <physiologicalReaction direction="left-to-right" evidence="2">
        <dbReference type="Rhea" id="RHEA:23445"/>
    </physiologicalReaction>
    <physiologicalReaction direction="right-to-left" evidence="2">
        <dbReference type="Rhea" id="RHEA:23446"/>
    </physiologicalReaction>
</comment>
<comment type="pathway">
    <text evidence="2">Fermentation; pyruvate fermentation to lactate; (S)-lactate from pyruvate: step 1/1.</text>
</comment>
<comment type="subunit">
    <text evidence="1">Homotetramer.</text>
</comment>
<comment type="subcellular location">
    <subcellularLocation>
        <location evidence="1">Cytoplasm</location>
    </subcellularLocation>
</comment>
<comment type="similarity">
    <text evidence="3">Belongs to the LDH/MDH superfamily. LDH family.</text>
</comment>
<reference key="1">
    <citation type="submission" date="1998-05" db="EMBL/GenBank/DDBJ databases">
        <title>Molecular evolution of vertebrate lactate dehydrogenase isozymes by gene duplication.</title>
        <authorList>
            <person name="Tsoi S.C.-M."/>
            <person name="Li J.Y."/>
            <person name="Mannen H."/>
            <person name="Li S.S.-L."/>
        </authorList>
    </citation>
    <scope>NUCLEOTIDE SEQUENCE [MRNA]</scope>
</reference>
<reference key="2">
    <citation type="submission" date="2004-03" db="EMBL/GenBank/DDBJ databases">
        <authorList>
            <consortium name="NIH - Zebrafish Gene Collection (ZGC) project"/>
        </authorList>
    </citation>
    <scope>NUCLEOTIDE SEQUENCE [LARGE SCALE MRNA]</scope>
    <source>
        <tissue>Kidney</tissue>
    </source>
</reference>
<feature type="initiator methionine" description="Removed" evidence="1">
    <location>
        <position position="1"/>
    </location>
</feature>
<feature type="chain" id="PRO_0000168429" description="L-lactate dehydrogenase A chain">
    <location>
        <begin position="2"/>
        <end position="333"/>
    </location>
</feature>
<feature type="active site" description="Proton acceptor" evidence="1">
    <location>
        <position position="194"/>
    </location>
</feature>
<feature type="binding site" evidence="1">
    <location>
        <begin position="30"/>
        <end position="58"/>
    </location>
    <ligand>
        <name>NAD(+)</name>
        <dbReference type="ChEBI" id="CHEBI:57540"/>
    </ligand>
</feature>
<feature type="binding site" evidence="1">
    <location>
        <position position="100"/>
    </location>
    <ligand>
        <name>NAD(+)</name>
        <dbReference type="ChEBI" id="CHEBI:57540"/>
    </ligand>
</feature>
<feature type="binding site" evidence="1">
    <location>
        <position position="107"/>
    </location>
    <ligand>
        <name>substrate</name>
    </ligand>
</feature>
<feature type="binding site" evidence="1">
    <location>
        <position position="139"/>
    </location>
    <ligand>
        <name>NAD(+)</name>
        <dbReference type="ChEBI" id="CHEBI:57540"/>
    </ligand>
</feature>
<feature type="binding site" evidence="1">
    <location>
        <position position="139"/>
    </location>
    <ligand>
        <name>substrate</name>
    </ligand>
</feature>
<feature type="binding site" evidence="1">
    <location>
        <position position="170"/>
    </location>
    <ligand>
        <name>substrate</name>
    </ligand>
</feature>
<feature type="binding site" evidence="1">
    <location>
        <position position="249"/>
    </location>
    <ligand>
        <name>substrate</name>
    </ligand>
</feature>
<dbReference type="EC" id="1.1.1.27" evidence="2"/>
<dbReference type="EMBL" id="AF067201">
    <property type="protein sequence ID" value="AAF02212.1"/>
    <property type="molecule type" value="mRNA"/>
</dbReference>
<dbReference type="EMBL" id="BC067188">
    <property type="protein sequence ID" value="AAH67188.1"/>
    <property type="molecule type" value="mRNA"/>
</dbReference>
<dbReference type="RefSeq" id="NP_571321.1">
    <property type="nucleotide sequence ID" value="NM_131246.1"/>
</dbReference>
<dbReference type="SMR" id="Q9PVK5"/>
<dbReference type="FunCoup" id="Q9PVK5">
    <property type="interactions" value="833"/>
</dbReference>
<dbReference type="STRING" id="7955.ENSDARP00000137433"/>
<dbReference type="PaxDb" id="7955-ENSDARP00000059885"/>
<dbReference type="Ensembl" id="ENSDART00000163892">
    <property type="protein sequence ID" value="ENSDARP00000137433"/>
    <property type="gene ID" value="ENSDARG00000101251"/>
</dbReference>
<dbReference type="Ensembl" id="ENSDART00000167542">
    <property type="protein sequence ID" value="ENSDARP00000140963"/>
    <property type="gene ID" value="ENSDARG00000101251"/>
</dbReference>
<dbReference type="GeneID" id="30496"/>
<dbReference type="KEGG" id="dre:30496"/>
<dbReference type="AGR" id="ZFIN:ZDB-GENE-991026-5"/>
<dbReference type="CTD" id="3939"/>
<dbReference type="ZFIN" id="ZDB-GENE-991026-5">
    <property type="gene designation" value="ldha"/>
</dbReference>
<dbReference type="eggNOG" id="KOG1495">
    <property type="taxonomic scope" value="Eukaryota"/>
</dbReference>
<dbReference type="HOGENOM" id="CLU_045401_0_2_1"/>
<dbReference type="InParanoid" id="Q9PVK5"/>
<dbReference type="OMA" id="EWDLDDY"/>
<dbReference type="OrthoDB" id="5405561at2759"/>
<dbReference type="PhylomeDB" id="Q9PVK5"/>
<dbReference type="TreeFam" id="TF314963"/>
<dbReference type="Reactome" id="R-DRE-70268">
    <property type="pathway name" value="Pyruvate metabolism"/>
</dbReference>
<dbReference type="Reactome" id="R-DRE-9861718">
    <property type="pathway name" value="Regulation of pyruvate metabolism"/>
</dbReference>
<dbReference type="UniPathway" id="UPA00554">
    <property type="reaction ID" value="UER00611"/>
</dbReference>
<dbReference type="PRO" id="PR:Q9PVK5"/>
<dbReference type="Proteomes" id="UP000000437">
    <property type="component" value="Chromosome 25"/>
</dbReference>
<dbReference type="Bgee" id="ENSDARG00000101251">
    <property type="expression patterns" value="Expressed in swim bladder and 48 other cell types or tissues"/>
</dbReference>
<dbReference type="GO" id="GO:0005739">
    <property type="term" value="C:mitochondrion"/>
    <property type="evidence" value="ECO:0000318"/>
    <property type="project" value="GO_Central"/>
</dbReference>
<dbReference type="GO" id="GO:0004459">
    <property type="term" value="F:L-lactate dehydrogenase activity"/>
    <property type="evidence" value="ECO:0000318"/>
    <property type="project" value="GO_Central"/>
</dbReference>
<dbReference type="GO" id="GO:0006089">
    <property type="term" value="P:lactate metabolic process"/>
    <property type="evidence" value="ECO:0000318"/>
    <property type="project" value="GO_Central"/>
</dbReference>
<dbReference type="GO" id="GO:0006090">
    <property type="term" value="P:pyruvate metabolic process"/>
    <property type="evidence" value="ECO:0000318"/>
    <property type="project" value="GO_Central"/>
</dbReference>
<dbReference type="GO" id="GO:0001666">
    <property type="term" value="P:response to hypoxia"/>
    <property type="evidence" value="ECO:0000314"/>
    <property type="project" value="ZFIN"/>
</dbReference>
<dbReference type="CDD" id="cd05293">
    <property type="entry name" value="LDH_1"/>
    <property type="match status" value="1"/>
</dbReference>
<dbReference type="FunFam" id="3.40.50.720:FF:000029">
    <property type="entry name" value="L-lactate dehydrogenase A chain"/>
    <property type="match status" value="1"/>
</dbReference>
<dbReference type="FunFam" id="3.90.110.10:FF:000003">
    <property type="entry name" value="L-lactate dehydrogenase A chain"/>
    <property type="match status" value="1"/>
</dbReference>
<dbReference type="Gene3D" id="3.90.110.10">
    <property type="entry name" value="Lactate dehydrogenase/glycoside hydrolase, family 4, C-terminal"/>
    <property type="match status" value="1"/>
</dbReference>
<dbReference type="Gene3D" id="3.40.50.720">
    <property type="entry name" value="NAD(P)-binding Rossmann-like Domain"/>
    <property type="match status" value="1"/>
</dbReference>
<dbReference type="HAMAP" id="MF_00488">
    <property type="entry name" value="Lactate_dehydrog"/>
    <property type="match status" value="1"/>
</dbReference>
<dbReference type="InterPro" id="IPR001557">
    <property type="entry name" value="L-lactate/malate_DH"/>
</dbReference>
<dbReference type="InterPro" id="IPR011304">
    <property type="entry name" value="L-lactate_DH"/>
</dbReference>
<dbReference type="InterPro" id="IPR018177">
    <property type="entry name" value="L-lactate_DH_AS"/>
</dbReference>
<dbReference type="InterPro" id="IPR022383">
    <property type="entry name" value="Lactate/malate_DH_C"/>
</dbReference>
<dbReference type="InterPro" id="IPR001236">
    <property type="entry name" value="Lactate/malate_DH_N"/>
</dbReference>
<dbReference type="InterPro" id="IPR015955">
    <property type="entry name" value="Lactate_DH/Glyco_Ohase_4_C"/>
</dbReference>
<dbReference type="InterPro" id="IPR036291">
    <property type="entry name" value="NAD(P)-bd_dom_sf"/>
</dbReference>
<dbReference type="NCBIfam" id="TIGR01771">
    <property type="entry name" value="L-LDH-NAD"/>
    <property type="match status" value="1"/>
</dbReference>
<dbReference type="NCBIfam" id="NF000824">
    <property type="entry name" value="PRK00066.1"/>
    <property type="match status" value="1"/>
</dbReference>
<dbReference type="PANTHER" id="PTHR43128">
    <property type="entry name" value="L-2-HYDROXYCARBOXYLATE DEHYDROGENASE (NAD(P)(+))"/>
    <property type="match status" value="1"/>
</dbReference>
<dbReference type="PANTHER" id="PTHR43128:SF10">
    <property type="entry name" value="L-LACTATE DEHYDROGENASE A CHAIN"/>
    <property type="match status" value="1"/>
</dbReference>
<dbReference type="Pfam" id="PF02866">
    <property type="entry name" value="Ldh_1_C"/>
    <property type="match status" value="1"/>
</dbReference>
<dbReference type="Pfam" id="PF00056">
    <property type="entry name" value="Ldh_1_N"/>
    <property type="match status" value="1"/>
</dbReference>
<dbReference type="PIRSF" id="PIRSF000102">
    <property type="entry name" value="Lac_mal_DH"/>
    <property type="match status" value="1"/>
</dbReference>
<dbReference type="PRINTS" id="PR00086">
    <property type="entry name" value="LLDHDRGNASE"/>
</dbReference>
<dbReference type="SUPFAM" id="SSF56327">
    <property type="entry name" value="LDH C-terminal domain-like"/>
    <property type="match status" value="1"/>
</dbReference>
<dbReference type="SUPFAM" id="SSF51735">
    <property type="entry name" value="NAD(P)-binding Rossmann-fold domains"/>
    <property type="match status" value="1"/>
</dbReference>
<dbReference type="PROSITE" id="PS00064">
    <property type="entry name" value="L_LDH"/>
    <property type="match status" value="1"/>
</dbReference>
<gene>
    <name type="primary">ldha</name>
</gene>